<keyword id="KW-1003">Cell membrane</keyword>
<keyword id="KW-0169">Cobalamin biosynthesis</keyword>
<keyword id="KW-0472">Membrane</keyword>
<keyword id="KW-0812">Transmembrane</keyword>
<keyword id="KW-1133">Transmembrane helix</keyword>
<reference key="1">
    <citation type="journal article" date="2005" name="Nat. Biotechnol.">
        <title>Genome sequence of the chlorinated compound-respiring bacterium Dehalococcoides species strain CBDB1.</title>
        <authorList>
            <person name="Kube M."/>
            <person name="Beck A."/>
            <person name="Zinder S.H."/>
            <person name="Kuhl H."/>
            <person name="Reinhardt R."/>
            <person name="Adrian L."/>
        </authorList>
    </citation>
    <scope>NUCLEOTIDE SEQUENCE [LARGE SCALE GENOMIC DNA]</scope>
    <source>
        <strain>CBDB1</strain>
    </source>
</reference>
<feature type="chain" id="PRO_1000201945" description="Cobalamin biosynthesis protein CobD">
    <location>
        <begin position="1"/>
        <end position="308"/>
    </location>
</feature>
<feature type="transmembrane region" description="Helical" evidence="1">
    <location>
        <begin position="1"/>
        <end position="21"/>
    </location>
</feature>
<feature type="transmembrane region" description="Helical" evidence="1">
    <location>
        <begin position="50"/>
        <end position="70"/>
    </location>
</feature>
<feature type="transmembrane region" description="Helical" evidence="1">
    <location>
        <begin position="71"/>
        <end position="91"/>
    </location>
</feature>
<feature type="transmembrane region" description="Helical" evidence="1">
    <location>
        <begin position="151"/>
        <end position="171"/>
    </location>
</feature>
<feature type="transmembrane region" description="Helical" evidence="1">
    <location>
        <begin position="202"/>
        <end position="222"/>
    </location>
</feature>
<feature type="transmembrane region" description="Helical" evidence="1">
    <location>
        <begin position="284"/>
        <end position="304"/>
    </location>
</feature>
<organism>
    <name type="scientific">Dehalococcoides mccartyi (strain CBDB1)</name>
    <dbReference type="NCBI Taxonomy" id="255470"/>
    <lineage>
        <taxon>Bacteria</taxon>
        <taxon>Bacillati</taxon>
        <taxon>Chloroflexota</taxon>
        <taxon>Dehalococcoidia</taxon>
        <taxon>Dehalococcoidales</taxon>
        <taxon>Dehalococcoidaceae</taxon>
        <taxon>Dehalococcoides</taxon>
    </lineage>
</organism>
<name>COBD_DEHMC</name>
<gene>
    <name evidence="1" type="primary">cobD</name>
    <name type="ordered locus">cbdbA638</name>
</gene>
<comment type="function">
    <text evidence="1">Converts cobyric acid to cobinamide by the addition of aminopropanol on the F carboxylic group.</text>
</comment>
<comment type="pathway">
    <text evidence="1">Cofactor biosynthesis; adenosylcobalamin biosynthesis.</text>
</comment>
<comment type="subcellular location">
    <subcellularLocation>
        <location evidence="1">Cell membrane</location>
        <topology evidence="1">Multi-pass membrane protein</topology>
    </subcellularLocation>
</comment>
<comment type="similarity">
    <text evidence="1">Belongs to the CobD/CbiB family.</text>
</comment>
<sequence>MEILLIFLLALVIDMVFGDPPNAFHPVAYMGKVISLFERAGFKGGKGYQFVYGIVMVIFTMALFFVPVYFLLDWLQGINSIVYIIVSAILFKMCFTVTGLRKAALLIKRLLEKDDIAQARFELRSLVSRDTSKLPQPKLVAAAVESVAESIGDGFVAPLFFFLIFGVPGVMAYRVVSTFDSMVGYRGKYEYLGKFAARFDDVLNFIPARLSALCILVASFFGRYSPAGAWRIMWRDHGKTQSPNAGWPMATAAGALEVCLEKVGHYSLGDDIRPLLPQTISCSLVLINNAGCIWVLISVGVIYFARIA</sequence>
<accession>Q3ZX56</accession>
<evidence type="ECO:0000255" key="1">
    <source>
        <dbReference type="HAMAP-Rule" id="MF_00024"/>
    </source>
</evidence>
<protein>
    <recommendedName>
        <fullName evidence="1">Cobalamin biosynthesis protein CobD</fullName>
    </recommendedName>
</protein>
<proteinExistence type="inferred from homology"/>
<dbReference type="EMBL" id="AJ965256">
    <property type="protein sequence ID" value="CAI82811.1"/>
    <property type="molecule type" value="Genomic_DNA"/>
</dbReference>
<dbReference type="RefSeq" id="WP_011309162.1">
    <property type="nucleotide sequence ID" value="NC_007356.1"/>
</dbReference>
<dbReference type="SMR" id="Q3ZX56"/>
<dbReference type="KEGG" id="deh:cbdbA638"/>
<dbReference type="HOGENOM" id="CLU_054212_0_2_0"/>
<dbReference type="UniPathway" id="UPA00148"/>
<dbReference type="Proteomes" id="UP000000433">
    <property type="component" value="Chromosome"/>
</dbReference>
<dbReference type="GO" id="GO:0005886">
    <property type="term" value="C:plasma membrane"/>
    <property type="evidence" value="ECO:0007669"/>
    <property type="project" value="UniProtKB-SubCell"/>
</dbReference>
<dbReference type="GO" id="GO:0015420">
    <property type="term" value="F:ABC-type vitamin B12 transporter activity"/>
    <property type="evidence" value="ECO:0007669"/>
    <property type="project" value="UniProtKB-UniRule"/>
</dbReference>
<dbReference type="GO" id="GO:0048472">
    <property type="term" value="F:threonine-phosphate decarboxylase activity"/>
    <property type="evidence" value="ECO:0007669"/>
    <property type="project" value="InterPro"/>
</dbReference>
<dbReference type="GO" id="GO:0009236">
    <property type="term" value="P:cobalamin biosynthetic process"/>
    <property type="evidence" value="ECO:0007669"/>
    <property type="project" value="UniProtKB-UniRule"/>
</dbReference>
<dbReference type="HAMAP" id="MF_00024">
    <property type="entry name" value="CobD_CbiB"/>
    <property type="match status" value="1"/>
</dbReference>
<dbReference type="InterPro" id="IPR004485">
    <property type="entry name" value="Cobalamin_biosynth_CobD/CbiB"/>
</dbReference>
<dbReference type="NCBIfam" id="TIGR00380">
    <property type="entry name" value="cobal_cbiB"/>
    <property type="match status" value="1"/>
</dbReference>
<dbReference type="NCBIfam" id="NF002281">
    <property type="entry name" value="PRK01209.2-5"/>
    <property type="match status" value="1"/>
</dbReference>
<dbReference type="PANTHER" id="PTHR34308">
    <property type="entry name" value="COBALAMIN BIOSYNTHESIS PROTEIN CBIB"/>
    <property type="match status" value="1"/>
</dbReference>
<dbReference type="PANTHER" id="PTHR34308:SF1">
    <property type="entry name" value="COBALAMIN BIOSYNTHESIS PROTEIN CBIB"/>
    <property type="match status" value="1"/>
</dbReference>
<dbReference type="Pfam" id="PF03186">
    <property type="entry name" value="CobD_Cbib"/>
    <property type="match status" value="1"/>
</dbReference>